<comment type="function">
    <text evidence="1">Poorly processive, error-prone DNA polymerase involved in untargeted mutagenesis. Copies undamaged DNA at stalled replication forks, which arise in vivo from mismatched or misaligned primer ends. These misaligned primers can be extended by PolIV. Exhibits no 3'-5' exonuclease (proofreading) activity. May be involved in translesional synthesis (By similarity).</text>
</comment>
<comment type="catalytic activity">
    <reaction>
        <text>DNA(n) + a 2'-deoxyribonucleoside 5'-triphosphate = DNA(n+1) + diphosphate</text>
        <dbReference type="Rhea" id="RHEA:22508"/>
        <dbReference type="Rhea" id="RHEA-COMP:17339"/>
        <dbReference type="Rhea" id="RHEA-COMP:17340"/>
        <dbReference type="ChEBI" id="CHEBI:33019"/>
        <dbReference type="ChEBI" id="CHEBI:61560"/>
        <dbReference type="ChEBI" id="CHEBI:173112"/>
        <dbReference type="EC" id="2.7.7.7"/>
    </reaction>
</comment>
<comment type="cofactor">
    <cofactor evidence="1">
        <name>Mg(2+)</name>
        <dbReference type="ChEBI" id="CHEBI:18420"/>
    </cofactor>
    <text evidence="1">Binds 2 magnesium ions per subunit.</text>
</comment>
<comment type="subunit">
    <text evidence="1">Monomer.</text>
</comment>
<comment type="subcellular location">
    <subcellularLocation>
        <location evidence="1">Cytoplasm</location>
    </subcellularLocation>
</comment>
<comment type="similarity">
    <text evidence="2">Belongs to the DNA polymerase type-Y family.</text>
</comment>
<sequence>MMPASNPKKNSSERRIVFHVDMDSFFASVEVRERPELKNLPVIVGSDPKGGSGRGVVSTCSYEARKYGIHSAMPISQAYRFCPDAVFLPVNMKLYAGVSAGVMEILRGFAEKFQQVSVDEAYLIPGSGVRNFEEAALYALRIKDEVQRQQKITCSVGVGPNKLVSKIASGFQKPDGLTVVRPEDVRDFLFPLPVSRIPGVGEKTEETLKKMGINRVEELANCDVQMLSEKLGKMGFRLKQLANGLDFEELVEKESVKSISRHGTFAEDTDDPVKVSGSLDLLIESVHGSLMKHSFLFKTITLTVRFEDFSTYTRSRTLSIWTSDVFVIKRTAMQLLSEFTGRRKFRLVGVGVTKLRERDERQTLITDFP</sequence>
<keyword id="KW-0963">Cytoplasm</keyword>
<keyword id="KW-0227">DNA damage</keyword>
<keyword id="KW-0234">DNA repair</keyword>
<keyword id="KW-0235">DNA replication</keyword>
<keyword id="KW-0238">DNA-binding</keyword>
<keyword id="KW-0239">DNA-directed DNA polymerase</keyword>
<keyword id="KW-0460">Magnesium</keyword>
<keyword id="KW-0479">Metal-binding</keyword>
<keyword id="KW-0515">Mutator protein</keyword>
<keyword id="KW-0548">Nucleotidyltransferase</keyword>
<keyword id="KW-0808">Transferase</keyword>
<dbReference type="EC" id="2.7.7.7"/>
<dbReference type="EMBL" id="AE008384">
    <property type="protein sequence ID" value="AAM32572.1"/>
    <property type="molecule type" value="Genomic_DNA"/>
</dbReference>
<dbReference type="SMR" id="Q8PT42"/>
<dbReference type="KEGG" id="mma:MM_2876"/>
<dbReference type="PATRIC" id="fig|192952.21.peg.3325"/>
<dbReference type="eggNOG" id="arCOG04582">
    <property type="taxonomic scope" value="Archaea"/>
</dbReference>
<dbReference type="HOGENOM" id="CLU_012348_1_1_2"/>
<dbReference type="Proteomes" id="UP000000595">
    <property type="component" value="Chromosome"/>
</dbReference>
<dbReference type="GO" id="GO:0005737">
    <property type="term" value="C:cytoplasm"/>
    <property type="evidence" value="ECO:0007669"/>
    <property type="project" value="UniProtKB-SubCell"/>
</dbReference>
<dbReference type="GO" id="GO:0003684">
    <property type="term" value="F:damaged DNA binding"/>
    <property type="evidence" value="ECO:0007669"/>
    <property type="project" value="InterPro"/>
</dbReference>
<dbReference type="GO" id="GO:0003887">
    <property type="term" value="F:DNA-directed DNA polymerase activity"/>
    <property type="evidence" value="ECO:0007669"/>
    <property type="project" value="UniProtKB-UniRule"/>
</dbReference>
<dbReference type="GO" id="GO:0000287">
    <property type="term" value="F:magnesium ion binding"/>
    <property type="evidence" value="ECO:0007669"/>
    <property type="project" value="UniProtKB-UniRule"/>
</dbReference>
<dbReference type="GO" id="GO:0006261">
    <property type="term" value="P:DNA-templated DNA replication"/>
    <property type="evidence" value="ECO:0007669"/>
    <property type="project" value="UniProtKB-UniRule"/>
</dbReference>
<dbReference type="GO" id="GO:0042276">
    <property type="term" value="P:error-prone translesion synthesis"/>
    <property type="evidence" value="ECO:0007669"/>
    <property type="project" value="TreeGrafter"/>
</dbReference>
<dbReference type="CDD" id="cd03586">
    <property type="entry name" value="PolY_Pol_IV_kappa"/>
    <property type="match status" value="1"/>
</dbReference>
<dbReference type="FunFam" id="3.30.1490.100:FF:000004">
    <property type="entry name" value="DNA polymerase IV"/>
    <property type="match status" value="1"/>
</dbReference>
<dbReference type="FunFam" id="3.40.1170.60:FF:000001">
    <property type="entry name" value="DNA polymerase IV"/>
    <property type="match status" value="1"/>
</dbReference>
<dbReference type="Gene3D" id="3.30.70.270">
    <property type="match status" value="1"/>
</dbReference>
<dbReference type="Gene3D" id="3.40.1170.60">
    <property type="match status" value="1"/>
</dbReference>
<dbReference type="Gene3D" id="1.10.150.20">
    <property type="entry name" value="5' to 3' exonuclease, C-terminal subdomain"/>
    <property type="match status" value="1"/>
</dbReference>
<dbReference type="Gene3D" id="3.30.1490.100">
    <property type="entry name" value="DNA polymerase, Y-family, little finger domain"/>
    <property type="match status" value="1"/>
</dbReference>
<dbReference type="HAMAP" id="MF_01113">
    <property type="entry name" value="DNApol_IV"/>
    <property type="match status" value="1"/>
</dbReference>
<dbReference type="InterPro" id="IPR043502">
    <property type="entry name" value="DNA/RNA_pol_sf"/>
</dbReference>
<dbReference type="InterPro" id="IPR036775">
    <property type="entry name" value="DNA_pol_Y-fam_lit_finger_sf"/>
</dbReference>
<dbReference type="InterPro" id="IPR017961">
    <property type="entry name" value="DNA_pol_Y-fam_little_finger"/>
</dbReference>
<dbReference type="InterPro" id="IPR050116">
    <property type="entry name" value="DNA_polymerase-Y"/>
</dbReference>
<dbReference type="InterPro" id="IPR022880">
    <property type="entry name" value="DNApol_IV"/>
</dbReference>
<dbReference type="InterPro" id="IPR024728">
    <property type="entry name" value="PolY_HhH_motif"/>
</dbReference>
<dbReference type="InterPro" id="IPR043128">
    <property type="entry name" value="Rev_trsase/Diguanyl_cyclase"/>
</dbReference>
<dbReference type="InterPro" id="IPR001126">
    <property type="entry name" value="UmuC"/>
</dbReference>
<dbReference type="NCBIfam" id="NF002677">
    <property type="entry name" value="PRK02406.1"/>
    <property type="match status" value="1"/>
</dbReference>
<dbReference type="PANTHER" id="PTHR11076:SF33">
    <property type="entry name" value="DNA POLYMERASE KAPPA"/>
    <property type="match status" value="1"/>
</dbReference>
<dbReference type="PANTHER" id="PTHR11076">
    <property type="entry name" value="DNA REPAIR POLYMERASE UMUC / TRANSFERASE FAMILY MEMBER"/>
    <property type="match status" value="1"/>
</dbReference>
<dbReference type="Pfam" id="PF00817">
    <property type="entry name" value="IMS"/>
    <property type="match status" value="1"/>
</dbReference>
<dbReference type="Pfam" id="PF11799">
    <property type="entry name" value="IMS_C"/>
    <property type="match status" value="1"/>
</dbReference>
<dbReference type="Pfam" id="PF11798">
    <property type="entry name" value="IMS_HHH"/>
    <property type="match status" value="1"/>
</dbReference>
<dbReference type="SUPFAM" id="SSF56672">
    <property type="entry name" value="DNA/RNA polymerases"/>
    <property type="match status" value="1"/>
</dbReference>
<dbReference type="SUPFAM" id="SSF100879">
    <property type="entry name" value="Lesion bypass DNA polymerase (Y-family), little finger domain"/>
    <property type="match status" value="1"/>
</dbReference>
<dbReference type="PROSITE" id="PS50173">
    <property type="entry name" value="UMUC"/>
    <property type="match status" value="1"/>
</dbReference>
<organism>
    <name type="scientific">Methanosarcina mazei (strain ATCC BAA-159 / DSM 3647 / Goe1 / Go1 / JCM 11833 / OCM 88)</name>
    <name type="common">Methanosarcina frisia</name>
    <dbReference type="NCBI Taxonomy" id="192952"/>
    <lineage>
        <taxon>Archaea</taxon>
        <taxon>Methanobacteriati</taxon>
        <taxon>Methanobacteriota</taxon>
        <taxon>Stenosarchaea group</taxon>
        <taxon>Methanomicrobia</taxon>
        <taxon>Methanosarcinales</taxon>
        <taxon>Methanosarcinaceae</taxon>
        <taxon>Methanosarcina</taxon>
    </lineage>
</organism>
<gene>
    <name type="primary">dbh2</name>
    <name type="ordered locus">MM_2876</name>
</gene>
<evidence type="ECO:0000250" key="1"/>
<evidence type="ECO:0000305" key="2"/>
<reference key="1">
    <citation type="journal article" date="2002" name="J. Mol. Microbiol. Biotechnol.">
        <title>The genome of Methanosarcina mazei: evidence for lateral gene transfer between Bacteria and Archaea.</title>
        <authorList>
            <person name="Deppenmeier U."/>
            <person name="Johann A."/>
            <person name="Hartsch T."/>
            <person name="Merkl R."/>
            <person name="Schmitz R.A."/>
            <person name="Martinez-Arias R."/>
            <person name="Henne A."/>
            <person name="Wiezer A."/>
            <person name="Baeumer S."/>
            <person name="Jacobi C."/>
            <person name="Brueggemann H."/>
            <person name="Lienard T."/>
            <person name="Christmann A."/>
            <person name="Boemecke M."/>
            <person name="Steckel S."/>
            <person name="Bhattacharyya A."/>
            <person name="Lykidis A."/>
            <person name="Overbeek R."/>
            <person name="Klenk H.-P."/>
            <person name="Gunsalus R.P."/>
            <person name="Fritz H.-J."/>
            <person name="Gottschalk G."/>
        </authorList>
    </citation>
    <scope>NUCLEOTIDE SEQUENCE [LARGE SCALE GENOMIC DNA]</scope>
    <source>
        <strain>ATCC BAA-159 / DSM 3647 / Goe1 / Go1 / JCM 11833 / OCM 88</strain>
    </source>
</reference>
<protein>
    <recommendedName>
        <fullName>DNA polymerase IV 2</fullName>
        <shortName>Pol IV 2</shortName>
        <ecNumber>2.7.7.7</ecNumber>
    </recommendedName>
</protein>
<proteinExistence type="inferred from homology"/>
<name>DPO42_METMA</name>
<feature type="chain" id="PRO_0000173972" description="DNA polymerase IV 2">
    <location>
        <begin position="1"/>
        <end position="369"/>
    </location>
</feature>
<feature type="domain" description="UmuC">
    <location>
        <begin position="17"/>
        <end position="201"/>
    </location>
</feature>
<feature type="active site" evidence="1">
    <location>
        <position position="120"/>
    </location>
</feature>
<feature type="binding site" evidence="1">
    <location>
        <position position="21"/>
    </location>
    <ligand>
        <name>Mg(2+)</name>
        <dbReference type="ChEBI" id="CHEBI:18420"/>
    </ligand>
</feature>
<feature type="binding site" evidence="1">
    <location>
        <position position="119"/>
    </location>
    <ligand>
        <name>Mg(2+)</name>
        <dbReference type="ChEBI" id="CHEBI:18420"/>
    </ligand>
</feature>
<feature type="site" description="Substrate discrimination" evidence="1">
    <location>
        <position position="26"/>
    </location>
</feature>
<accession>Q8PT42</accession>